<feature type="chain" id="PRO_0000445644" description="Salicyl-AMP ligase / salicyl-S-ArCP synthetase">
    <location>
        <begin position="1"/>
        <end position="565"/>
    </location>
</feature>
<feature type="binding site" evidence="1">
    <location>
        <position position="214"/>
    </location>
    <ligand>
        <name>ATP</name>
        <dbReference type="ChEBI" id="CHEBI:30616"/>
    </ligand>
</feature>
<feature type="binding site" evidence="1">
    <location>
        <position position="330"/>
    </location>
    <ligand>
        <name>ATP</name>
        <dbReference type="ChEBI" id="CHEBI:30616"/>
    </ligand>
</feature>
<feature type="binding site" evidence="1">
    <location>
        <position position="352"/>
    </location>
    <ligand>
        <name>ATP</name>
        <dbReference type="ChEBI" id="CHEBI:30616"/>
    </ligand>
</feature>
<feature type="binding site" evidence="1">
    <location>
        <position position="436"/>
    </location>
    <ligand>
        <name>ATP</name>
        <dbReference type="ChEBI" id="CHEBI:30616"/>
    </ligand>
</feature>
<feature type="binding site" evidence="1">
    <location>
        <position position="451"/>
    </location>
    <ligand>
        <name>ATP</name>
        <dbReference type="ChEBI" id="CHEBI:30616"/>
    </ligand>
</feature>
<feature type="binding site" evidence="1">
    <location>
        <position position="542"/>
    </location>
    <ligand>
        <name>ATP</name>
        <dbReference type="ChEBI" id="CHEBI:30616"/>
    </ligand>
</feature>
<name>MBTA_MYCTU</name>
<keyword id="KW-0067">ATP-binding</keyword>
<keyword id="KW-0436">Ligase</keyword>
<keyword id="KW-0547">Nucleotide-binding</keyword>
<keyword id="KW-1185">Reference proteome</keyword>
<keyword id="KW-0808">Transferase</keyword>
<gene>
    <name evidence="7" type="primary">mbtA</name>
    <name evidence="9" type="ordered locus">Rv2384</name>
</gene>
<accession>P71716</accession>
<accession>F2GI64</accession>
<accession>I6Y957</accession>
<accession>Q7D787</accession>
<evidence type="ECO:0000250" key="1">
    <source>
        <dbReference type="UniProtKB" id="P40871"/>
    </source>
</evidence>
<evidence type="ECO:0000269" key="2">
    <source>
    </source>
</evidence>
<evidence type="ECO:0000269" key="3">
    <source>
    </source>
</evidence>
<evidence type="ECO:0000269" key="4">
    <source>
    </source>
</evidence>
<evidence type="ECO:0000269" key="5">
    <source>
    </source>
</evidence>
<evidence type="ECO:0000269" key="6">
    <source>
    </source>
</evidence>
<evidence type="ECO:0000303" key="7">
    <source>
    </source>
</evidence>
<evidence type="ECO:0000305" key="8"/>
<evidence type="ECO:0000312" key="9">
    <source>
        <dbReference type="EMBL" id="CCP45172.1"/>
    </source>
</evidence>
<evidence type="ECO:0007744" key="10">
    <source>
    </source>
</evidence>
<comment type="function">
    <text evidence="6">Involved in the initial steps of the mycobactin biosynthetic pathway. Catalyzes the salicylation of the aryl carrier protein (ArCP) domain of MbtB through a two-step reaction. The first step is the ATP-dependent adenylation of salicylate to generate a salicyl-AMP intermediate. The second step is the transfer of this activated salicylate to MbtB to form a salicyl-ArCP domain thioester.</text>
</comment>
<comment type="catalytic activity">
    <reaction evidence="4 6">
        <text>salicylate + ATP + H(+) = 2-hydroxybenzoyl-5'-AMP + diphosphate</text>
        <dbReference type="Rhea" id="RHEA:46704"/>
        <dbReference type="ChEBI" id="CHEBI:15378"/>
        <dbReference type="ChEBI" id="CHEBI:30616"/>
        <dbReference type="ChEBI" id="CHEBI:30762"/>
        <dbReference type="ChEBI" id="CHEBI:33019"/>
        <dbReference type="ChEBI" id="CHEBI:86458"/>
    </reaction>
</comment>
<comment type="catalytic activity">
    <reaction evidence="6">
        <text>2-hydroxybenzoyl-5'-AMP + holo-[ACP] = salicyl-[ACP] + AMP + H(+)</text>
        <dbReference type="Rhea" id="RHEA:46708"/>
        <dbReference type="Rhea" id="RHEA-COMP:9685"/>
        <dbReference type="Rhea" id="RHEA-COMP:19022"/>
        <dbReference type="ChEBI" id="CHEBI:15378"/>
        <dbReference type="ChEBI" id="CHEBI:64479"/>
        <dbReference type="ChEBI" id="CHEBI:86458"/>
        <dbReference type="ChEBI" id="CHEBI:86464"/>
        <dbReference type="ChEBI" id="CHEBI:456215"/>
    </reaction>
</comment>
<comment type="activity regulation">
    <text evidence="3 4 5">Inhibited by salicyl-AMS, an acyl-AMP analog (PubMed:16407990, PubMed:17181146). Also inhibited by 5'-O-[(N-acyl)sulfamoyl]adenosines (PubMed:17967002).</text>
</comment>
<comment type="biophysicochemical properties">
    <kinetics>
        <KM evidence="6">9 uM for salicylic acid</KM>
        <KM evidence="4">3.3 uM for salicylic acid</KM>
        <KM evidence="4">184 uM for ATP</KM>
        <text evidence="6">kcat is 42.7 min(-1) for the adenylation reaction.</text>
    </kinetics>
</comment>
<comment type="pathway">
    <text evidence="3 4 6">Siderophore biosynthesis; mycobactin biosynthesis.</text>
</comment>
<comment type="induction">
    <text evidence="2">Induced by iron starvation conditions. Transcriptionally repressed by IdeR and iron.</text>
</comment>
<comment type="similarity">
    <text evidence="8">Belongs to the ATP-dependent AMP-binding enzyme family.</text>
</comment>
<dbReference type="EC" id="6.2.1.-" evidence="6"/>
<dbReference type="EC" id="2.7.7.-" evidence="4 6"/>
<dbReference type="EMBL" id="AL123456">
    <property type="protein sequence ID" value="CCP45172.1"/>
    <property type="molecule type" value="Genomic_DNA"/>
</dbReference>
<dbReference type="RefSeq" id="NP_216900.1">
    <property type="nucleotide sequence ID" value="NC_000962.3"/>
</dbReference>
<dbReference type="RefSeq" id="WP_003412282.1">
    <property type="nucleotide sequence ID" value="NZ_NVQJ01000029.1"/>
</dbReference>
<dbReference type="SMR" id="P71716"/>
<dbReference type="FunCoup" id="P71716">
    <property type="interactions" value="9"/>
</dbReference>
<dbReference type="STRING" id="83332.Rv2384"/>
<dbReference type="BindingDB" id="P71716"/>
<dbReference type="ChEMBL" id="CHEMBL5662"/>
<dbReference type="SwissLipids" id="SLP:000001282"/>
<dbReference type="PaxDb" id="83332-Rv2384"/>
<dbReference type="DNASU" id="885833"/>
<dbReference type="GeneID" id="885833"/>
<dbReference type="KEGG" id="mtu:Rv2384"/>
<dbReference type="KEGG" id="mtv:RVBD_2384"/>
<dbReference type="PATRIC" id="fig|83332.111.peg.2658"/>
<dbReference type="TubercuList" id="Rv2384"/>
<dbReference type="eggNOG" id="COG1021">
    <property type="taxonomic scope" value="Bacteria"/>
</dbReference>
<dbReference type="InParanoid" id="P71716"/>
<dbReference type="OrthoDB" id="9803968at2"/>
<dbReference type="PhylomeDB" id="P71716"/>
<dbReference type="BioCyc" id="MetaCyc:G185E-6610-MONOMER"/>
<dbReference type="UniPathway" id="UPA00011"/>
<dbReference type="Proteomes" id="UP000001584">
    <property type="component" value="Chromosome"/>
</dbReference>
<dbReference type="GO" id="GO:0016878">
    <property type="term" value="F:acid-thiol ligase activity"/>
    <property type="evidence" value="ECO:0000314"/>
    <property type="project" value="UniProtKB"/>
</dbReference>
<dbReference type="GO" id="GO:0005524">
    <property type="term" value="F:ATP binding"/>
    <property type="evidence" value="ECO:0007669"/>
    <property type="project" value="UniProtKB-KW"/>
</dbReference>
<dbReference type="GO" id="GO:0016779">
    <property type="term" value="F:nucleotidyltransferase activity"/>
    <property type="evidence" value="ECO:0000314"/>
    <property type="project" value="UniProtKB"/>
</dbReference>
<dbReference type="GO" id="GO:0010106">
    <property type="term" value="P:cellular response to iron ion starvation"/>
    <property type="evidence" value="ECO:0000270"/>
    <property type="project" value="MTBBASE"/>
</dbReference>
<dbReference type="GO" id="GO:0019290">
    <property type="term" value="P:siderophore biosynthetic process"/>
    <property type="evidence" value="ECO:0000314"/>
    <property type="project" value="UniProtKB"/>
</dbReference>
<dbReference type="Gene3D" id="3.30.300.30">
    <property type="match status" value="1"/>
</dbReference>
<dbReference type="Gene3D" id="3.40.50.12780">
    <property type="entry name" value="N-terminal domain of ligase-like"/>
    <property type="match status" value="1"/>
</dbReference>
<dbReference type="InterPro" id="IPR025110">
    <property type="entry name" value="AMP-bd_C"/>
</dbReference>
<dbReference type="InterPro" id="IPR045851">
    <property type="entry name" value="AMP-bd_C_sf"/>
</dbReference>
<dbReference type="InterPro" id="IPR000873">
    <property type="entry name" value="AMP-dep_synth/lig_dom"/>
</dbReference>
<dbReference type="InterPro" id="IPR042099">
    <property type="entry name" value="ANL_N_sf"/>
</dbReference>
<dbReference type="InterPro" id="IPR050237">
    <property type="entry name" value="ATP-dep_AMP-bd_enzyme"/>
</dbReference>
<dbReference type="PANTHER" id="PTHR43767">
    <property type="entry name" value="LONG-CHAIN-FATTY-ACID--COA LIGASE"/>
    <property type="match status" value="1"/>
</dbReference>
<dbReference type="PANTHER" id="PTHR43767:SF1">
    <property type="entry name" value="NONRIBOSOMAL PEPTIDE SYNTHASE PES1 (EUROFUNG)-RELATED"/>
    <property type="match status" value="1"/>
</dbReference>
<dbReference type="Pfam" id="PF00501">
    <property type="entry name" value="AMP-binding"/>
    <property type="match status" value="1"/>
</dbReference>
<dbReference type="Pfam" id="PF13193">
    <property type="entry name" value="AMP-binding_C"/>
    <property type="match status" value="1"/>
</dbReference>
<dbReference type="SUPFAM" id="SSF56801">
    <property type="entry name" value="Acetyl-CoA synthetase-like"/>
    <property type="match status" value="1"/>
</dbReference>
<reference key="1">
    <citation type="journal article" date="1998" name="Nature">
        <title>Deciphering the biology of Mycobacterium tuberculosis from the complete genome sequence.</title>
        <authorList>
            <person name="Cole S.T."/>
            <person name="Brosch R."/>
            <person name="Parkhill J."/>
            <person name="Garnier T."/>
            <person name="Churcher C.M."/>
            <person name="Harris D.E."/>
            <person name="Gordon S.V."/>
            <person name="Eiglmeier K."/>
            <person name="Gas S."/>
            <person name="Barry C.E. III"/>
            <person name="Tekaia F."/>
            <person name="Badcock K."/>
            <person name="Basham D."/>
            <person name="Brown D."/>
            <person name="Chillingworth T."/>
            <person name="Connor R."/>
            <person name="Davies R.M."/>
            <person name="Devlin K."/>
            <person name="Feltwell T."/>
            <person name="Gentles S."/>
            <person name="Hamlin N."/>
            <person name="Holroyd S."/>
            <person name="Hornsby T."/>
            <person name="Jagels K."/>
            <person name="Krogh A."/>
            <person name="McLean J."/>
            <person name="Moule S."/>
            <person name="Murphy L.D."/>
            <person name="Oliver S."/>
            <person name="Osborne J."/>
            <person name="Quail M.A."/>
            <person name="Rajandream M.A."/>
            <person name="Rogers J."/>
            <person name="Rutter S."/>
            <person name="Seeger K."/>
            <person name="Skelton S."/>
            <person name="Squares S."/>
            <person name="Squares R."/>
            <person name="Sulston J.E."/>
            <person name="Taylor K."/>
            <person name="Whitehead S."/>
            <person name="Barrell B.G."/>
        </authorList>
    </citation>
    <scope>NUCLEOTIDE SEQUENCE [LARGE SCALE GENOMIC DNA]</scope>
    <source>
        <strain>ATCC 25618 / H37Rv</strain>
    </source>
</reference>
<reference key="2">
    <citation type="journal article" date="1998" name="Chem. Biol.">
        <title>Identification of a Mycobacterium tuberculosis gene cluster encoding the biosynthetic enzymes for assembly of the virulence-conferring siderophore mycobactin.</title>
        <authorList>
            <person name="Quadri L.E.N."/>
            <person name="Sello J."/>
            <person name="Keating T.A."/>
            <person name="Weinreb P.H."/>
            <person name="Walsh C.T."/>
        </authorList>
    </citation>
    <scope>FUNCTION</scope>
    <scope>CATALYTIC ACTIVITY</scope>
    <scope>BIOPHYSICOCHEMICAL PROPERTIES</scope>
    <scope>PATHWAY</scope>
    <source>
        <strain>CSU93</strain>
    </source>
</reference>
<reference key="3">
    <citation type="journal article" date="2001" name="Mol. Microbiol.">
        <title>The Mycobacterium tuberculosis IdeR is a dual functional regulator that controls transcription of genes involved in iron acquisition, iron storage and survival in macrophages.</title>
        <authorList>
            <person name="Gold B."/>
            <person name="Rodriguez G.M."/>
            <person name="Marras S.A.E."/>
            <person name="Pentecost M."/>
            <person name="Smith I."/>
        </authorList>
    </citation>
    <scope>INDUCTION</scope>
</reference>
<reference key="4">
    <citation type="journal article" date="2005" name="Nat. Chem. Biol.">
        <title>Small-molecule inhibition of siderophore biosynthesis in Mycobacterium tuberculosis and Yersinia pestis.</title>
        <authorList>
            <person name="Ferreras J.A."/>
            <person name="Ryu J.S."/>
            <person name="Di Lello F."/>
            <person name="Tan D.S."/>
            <person name="Quadri L.E."/>
        </authorList>
    </citation>
    <scope>ACTIVITY REGULATION</scope>
    <scope>PATHWAY</scope>
</reference>
<reference key="5">
    <citation type="journal article" date="2006" name="J. Med. Chem.">
        <title>Antitubercular nucleosides that inhibit siderophore biosynthesis: SAR of the glycosyl domain.</title>
        <authorList>
            <person name="Somu R.V."/>
            <person name="Wilson D.J."/>
            <person name="Bennett E.M."/>
            <person name="Boshoff H.I."/>
            <person name="Celia L."/>
            <person name="Beck B.J."/>
            <person name="Barry C.E. III"/>
            <person name="Aldrich C.C."/>
        </authorList>
    </citation>
    <scope>CATALYTIC ACTIVITY</scope>
    <scope>ACTIVITY REGULATION</scope>
    <scope>BIOPHYSICOCHEMICAL PROPERTIES</scope>
    <scope>PATHWAY</scope>
</reference>
<reference key="6">
    <citation type="journal article" date="2007" name="J. Med. Chem.">
        <title>5'-O-[(N-acyl)sulfamoyl]adenosines as antitubercular agents that inhibit MbtA: an adenylation enzyme required for siderophore biosynthesis of the mycobactins.</title>
        <authorList>
            <person name="Qiao C."/>
            <person name="Gupte A."/>
            <person name="Boshoff H.I."/>
            <person name="Wilson D.J."/>
            <person name="Bennett E.M."/>
            <person name="Somu R.V."/>
            <person name="Barry C.E. III"/>
            <person name="Aldrich C.C."/>
        </authorList>
    </citation>
    <scope>ACTIVITY REGULATION</scope>
</reference>
<reference evidence="10" key="7">
    <citation type="journal article" date="2011" name="Mol. Cell. Proteomics">
        <title>Proteogenomic analysis of Mycobacterium tuberculosis by high resolution mass spectrometry.</title>
        <authorList>
            <person name="Kelkar D.S."/>
            <person name="Kumar D."/>
            <person name="Kumar P."/>
            <person name="Balakrishnan L."/>
            <person name="Muthusamy B."/>
            <person name="Yadav A.K."/>
            <person name="Shrivastava P."/>
            <person name="Marimuthu A."/>
            <person name="Anand S."/>
            <person name="Sundaram H."/>
            <person name="Kingsbury R."/>
            <person name="Harsha H.C."/>
            <person name="Nair B."/>
            <person name="Prasad T.S."/>
            <person name="Chauhan D.S."/>
            <person name="Katoch K."/>
            <person name="Katoch V.M."/>
            <person name="Kumar P."/>
            <person name="Chaerkady R."/>
            <person name="Ramachandran S."/>
            <person name="Dash D."/>
            <person name="Pandey A."/>
        </authorList>
    </citation>
    <scope>IDENTIFICATION BY MASS SPECTROMETRY [LARGE SCALE ANALYSIS]</scope>
</reference>
<proteinExistence type="evidence at protein level"/>
<protein>
    <recommendedName>
        <fullName evidence="8">Salicyl-AMP ligase / salicyl-S-ArCP synthetase</fullName>
        <ecNumber evidence="6">6.2.1.-</ecNumber>
    </recommendedName>
    <alternativeName>
        <fullName evidence="8">Mycobactin biosynthesis protein MbtA</fullName>
    </alternativeName>
    <alternativeName>
        <fullName evidence="7">Salicyl-AMP ligase</fullName>
        <shortName evidence="7">Sal-AMP ligase</shortName>
        <ecNumber evidence="4 6">2.7.7.-</ecNumber>
    </alternativeName>
    <alternativeName>
        <fullName evidence="7">Salicyl-S-ArCP synthetase</fullName>
    </alternativeName>
</protein>
<organism>
    <name type="scientific">Mycobacterium tuberculosis (strain ATCC 25618 / H37Rv)</name>
    <dbReference type="NCBI Taxonomy" id="83332"/>
    <lineage>
        <taxon>Bacteria</taxon>
        <taxon>Bacillati</taxon>
        <taxon>Actinomycetota</taxon>
        <taxon>Actinomycetes</taxon>
        <taxon>Mycobacteriales</taxon>
        <taxon>Mycobacteriaceae</taxon>
        <taxon>Mycobacterium</taxon>
        <taxon>Mycobacterium tuberculosis complex</taxon>
    </lineage>
</organism>
<sequence length="565" mass="59281">MPPKAADGRRPSPDGGLGGFVPFPADRAASYRAAGYWSGRTLDTVLSDAARRWPDRLAVADAGDRPGHGGLSYAELDQRADRAAAALHGLGITPGDRVLLQLPNGCQFAVALFALLRAGAIPVMCLPGHRAAELGHFAAVSAATGLVVADVASGFDYRPMARELVADHPTLRHVIVDGDPGPFVSWAQLCAQAGTGSPAPPADPGSPALLLVSGGTTGMPKLIPRTHDDYVFNATASAALCRLSADDVYLVVLAAGHNFPLACPGLLGAMTVGATAVFAPDPSPEAAFAAIERHGVTVTALVPALAKLWAQSCEWEPVTPKSLRLLQVGGSKLEPEDARRVRTALTPGLQQVFGMAEGLLNFTRIGDPPEVVEHTQGRPLCPADELRIVNADGEPVGPGEEGELLVRGPYTLNGYFAAERDNERCFDPDGFYRSGDLVRRRDDGNLVVTGRVKDVICRAGETIAASDLEEQLLSHPAIFSAAAVGLPDQYLGEKICAAVVFAGAPITLAELNGYLDRRGVAAHTRPDQLVAMPALPTTPIGKIDKRAIVRQLGIATGPVTTQRCH</sequence>